<comment type="function">
    <text evidence="1">ATP-dependent RNA helicase which is a subunit of the eIF4F complex involved in cap recognition and is required for mRNA binding to ribosome. In the current model of translation initiation, eIF4A unwinds RNA secondary structures in the 5'-UTR of mRNAs which is necessary to allow efficient binding of the small ribosomal subunit, and subsequent scanning for the initiator codon (By similarity).</text>
</comment>
<comment type="catalytic activity">
    <reaction>
        <text>ATP + H2O = ADP + phosphate + H(+)</text>
        <dbReference type="Rhea" id="RHEA:13065"/>
        <dbReference type="ChEBI" id="CHEBI:15377"/>
        <dbReference type="ChEBI" id="CHEBI:15378"/>
        <dbReference type="ChEBI" id="CHEBI:30616"/>
        <dbReference type="ChEBI" id="CHEBI:43474"/>
        <dbReference type="ChEBI" id="CHEBI:456216"/>
        <dbReference type="EC" id="3.6.4.13"/>
    </reaction>
</comment>
<comment type="subunit">
    <text evidence="1">Component of the eIF4F complex, which composition varies with external and internal environmental conditions. It is composed of at least eIF4A, eIF4E and eIF4G (By similarity).</text>
</comment>
<comment type="subcellular location">
    <subcellularLocation>
        <location evidence="1">Cytoplasm</location>
    </subcellularLocation>
</comment>
<comment type="domain">
    <text>The Q motif is unique to and characteristic of the DEAD box family of RNA helicases and controls ATP binding and hydrolysis.</text>
</comment>
<comment type="similarity">
    <text evidence="4">Belongs to the DEAD box helicase family. eIF4A subfamily.</text>
</comment>
<proteinExistence type="inferred from homology"/>
<sequence>MATDKGLEDVPEGQIESNYDETVDSFDDMNLKSELLRGIYAYGFERPSAIQQRAIMPVIKGHDVIAQAQSGTGKTATFSISVLQKIDPTVKSCQALILAPTRELAQQIQKVVIAIGDFMNIECHACIGGTSVRDDMKALQDGPQVIVGTPGRVHDMIQRRILKTDQMKMFVLDEADEMLSRGFTEQIYDIFQLLPQSTQVVLLSATMPQDVLEVTTKFMRDPVRILVKKDELTLEGIKQFYIAVEKEDWKLDTLSDLYETVTITQAVIFCNTRRKVDWLTDKLQARDFTVSAMHGDMDQTQRDLIMKEFRSGSSRVLIATDLLARGIDVQQVSLVINYDLPANRENYIHRIGRGGRFGRKGVAINFVTADDVRMMREIEQFYSTQIEEMPMNVADLI</sequence>
<dbReference type="EC" id="3.6.4.13"/>
<dbReference type="EMBL" id="CH408029">
    <property type="protein sequence ID" value="EAQ92728.1"/>
    <property type="molecule type" value="Genomic_DNA"/>
</dbReference>
<dbReference type="RefSeq" id="XP_001220184.1">
    <property type="nucleotide sequence ID" value="XM_001220183.1"/>
</dbReference>
<dbReference type="SMR" id="Q2HFP1"/>
<dbReference type="FunCoup" id="Q2HFP1">
    <property type="interactions" value="1125"/>
</dbReference>
<dbReference type="STRING" id="306901.Q2HFP1"/>
<dbReference type="GeneID" id="4387326"/>
<dbReference type="VEuPathDB" id="FungiDB:CHGG_00963"/>
<dbReference type="eggNOG" id="KOG0327">
    <property type="taxonomic scope" value="Eukaryota"/>
</dbReference>
<dbReference type="HOGENOM" id="CLU_003041_1_0_1"/>
<dbReference type="InParanoid" id="Q2HFP1"/>
<dbReference type="OMA" id="FGCQALV"/>
<dbReference type="OrthoDB" id="10265785at2759"/>
<dbReference type="Proteomes" id="UP000001056">
    <property type="component" value="Unassembled WGS sequence"/>
</dbReference>
<dbReference type="GO" id="GO:0005737">
    <property type="term" value="C:cytoplasm"/>
    <property type="evidence" value="ECO:0007669"/>
    <property type="project" value="UniProtKB-SubCell"/>
</dbReference>
<dbReference type="GO" id="GO:0005524">
    <property type="term" value="F:ATP binding"/>
    <property type="evidence" value="ECO:0007669"/>
    <property type="project" value="UniProtKB-KW"/>
</dbReference>
<dbReference type="GO" id="GO:0016887">
    <property type="term" value="F:ATP hydrolysis activity"/>
    <property type="evidence" value="ECO:0007669"/>
    <property type="project" value="RHEA"/>
</dbReference>
<dbReference type="GO" id="GO:0003723">
    <property type="term" value="F:RNA binding"/>
    <property type="evidence" value="ECO:0007669"/>
    <property type="project" value="UniProtKB-KW"/>
</dbReference>
<dbReference type="GO" id="GO:0003724">
    <property type="term" value="F:RNA helicase activity"/>
    <property type="evidence" value="ECO:0007669"/>
    <property type="project" value="UniProtKB-EC"/>
</dbReference>
<dbReference type="GO" id="GO:0003743">
    <property type="term" value="F:translation initiation factor activity"/>
    <property type="evidence" value="ECO:0007669"/>
    <property type="project" value="UniProtKB-KW"/>
</dbReference>
<dbReference type="GO" id="GO:0002183">
    <property type="term" value="P:cytoplasmic translational initiation"/>
    <property type="evidence" value="ECO:0007669"/>
    <property type="project" value="EnsemblFungi"/>
</dbReference>
<dbReference type="CDD" id="cd18046">
    <property type="entry name" value="DEADc_EIF4AII_EIF4AI_DDX2"/>
    <property type="match status" value="1"/>
</dbReference>
<dbReference type="CDD" id="cd18787">
    <property type="entry name" value="SF2_C_DEAD"/>
    <property type="match status" value="1"/>
</dbReference>
<dbReference type="FunFam" id="3.40.50.300:FF:000089">
    <property type="entry name" value="Eukaryotic initiation factor 4A-II"/>
    <property type="match status" value="1"/>
</dbReference>
<dbReference type="FunFam" id="3.40.50.300:FF:000031">
    <property type="entry name" value="Eukaryotic initiation factor 4A-III"/>
    <property type="match status" value="1"/>
</dbReference>
<dbReference type="Gene3D" id="3.40.50.300">
    <property type="entry name" value="P-loop containing nucleotide triphosphate hydrolases"/>
    <property type="match status" value="2"/>
</dbReference>
<dbReference type="InterPro" id="IPR011545">
    <property type="entry name" value="DEAD/DEAH_box_helicase_dom"/>
</dbReference>
<dbReference type="InterPro" id="IPR044728">
    <property type="entry name" value="EIF4A_DEADc"/>
</dbReference>
<dbReference type="InterPro" id="IPR014001">
    <property type="entry name" value="Helicase_ATP-bd"/>
</dbReference>
<dbReference type="InterPro" id="IPR001650">
    <property type="entry name" value="Helicase_C-like"/>
</dbReference>
<dbReference type="InterPro" id="IPR027417">
    <property type="entry name" value="P-loop_NTPase"/>
</dbReference>
<dbReference type="InterPro" id="IPR000629">
    <property type="entry name" value="RNA-helicase_DEAD-box_CS"/>
</dbReference>
<dbReference type="InterPro" id="IPR014014">
    <property type="entry name" value="RNA_helicase_DEAD_Q_motif"/>
</dbReference>
<dbReference type="PANTHER" id="PTHR47958">
    <property type="entry name" value="ATP-DEPENDENT RNA HELICASE DBP3"/>
    <property type="match status" value="1"/>
</dbReference>
<dbReference type="Pfam" id="PF00270">
    <property type="entry name" value="DEAD"/>
    <property type="match status" value="1"/>
</dbReference>
<dbReference type="Pfam" id="PF00271">
    <property type="entry name" value="Helicase_C"/>
    <property type="match status" value="1"/>
</dbReference>
<dbReference type="SMART" id="SM00487">
    <property type="entry name" value="DEXDc"/>
    <property type="match status" value="1"/>
</dbReference>
<dbReference type="SMART" id="SM00490">
    <property type="entry name" value="HELICc"/>
    <property type="match status" value="1"/>
</dbReference>
<dbReference type="SUPFAM" id="SSF52540">
    <property type="entry name" value="P-loop containing nucleoside triphosphate hydrolases"/>
    <property type="match status" value="2"/>
</dbReference>
<dbReference type="PROSITE" id="PS00039">
    <property type="entry name" value="DEAD_ATP_HELICASE"/>
    <property type="match status" value="1"/>
</dbReference>
<dbReference type="PROSITE" id="PS51192">
    <property type="entry name" value="HELICASE_ATP_BIND_1"/>
    <property type="match status" value="1"/>
</dbReference>
<dbReference type="PROSITE" id="PS51194">
    <property type="entry name" value="HELICASE_CTER"/>
    <property type="match status" value="1"/>
</dbReference>
<dbReference type="PROSITE" id="PS51195">
    <property type="entry name" value="Q_MOTIF"/>
    <property type="match status" value="1"/>
</dbReference>
<name>IF4A_CHAGB</name>
<keyword id="KW-0067">ATP-binding</keyword>
<keyword id="KW-0963">Cytoplasm</keyword>
<keyword id="KW-0347">Helicase</keyword>
<keyword id="KW-0378">Hydrolase</keyword>
<keyword id="KW-0396">Initiation factor</keyword>
<keyword id="KW-0547">Nucleotide-binding</keyword>
<keyword id="KW-0648">Protein biosynthesis</keyword>
<keyword id="KW-1185">Reference proteome</keyword>
<keyword id="KW-0694">RNA-binding</keyword>
<evidence type="ECO:0000250" key="1"/>
<evidence type="ECO:0000255" key="2">
    <source>
        <dbReference type="PROSITE-ProRule" id="PRU00541"/>
    </source>
</evidence>
<evidence type="ECO:0000255" key="3">
    <source>
        <dbReference type="PROSITE-ProRule" id="PRU00542"/>
    </source>
</evidence>
<evidence type="ECO:0000305" key="4"/>
<accession>Q2HFP1</accession>
<protein>
    <recommendedName>
        <fullName>ATP-dependent RNA helicase eIF4A</fullName>
        <ecNumber>3.6.4.13</ecNumber>
    </recommendedName>
    <alternativeName>
        <fullName>Eukaryotic initiation factor 4A</fullName>
        <shortName>eIF-4A</shortName>
    </alternativeName>
    <alternativeName>
        <fullName>Translation initiation factor 1</fullName>
    </alternativeName>
</protein>
<feature type="chain" id="PRO_0000255982" description="ATP-dependent RNA helicase eIF4A">
    <location>
        <begin position="1"/>
        <end position="397"/>
    </location>
</feature>
<feature type="domain" description="Helicase ATP-binding" evidence="2">
    <location>
        <begin position="55"/>
        <end position="225"/>
    </location>
</feature>
<feature type="domain" description="Helicase C-terminal" evidence="3">
    <location>
        <begin position="236"/>
        <end position="397"/>
    </location>
</feature>
<feature type="short sequence motif" description="Q motif">
    <location>
        <begin position="24"/>
        <end position="52"/>
    </location>
</feature>
<feature type="short sequence motif" description="DEAD box">
    <location>
        <begin position="173"/>
        <end position="176"/>
    </location>
</feature>
<feature type="binding site" evidence="2">
    <location>
        <begin position="68"/>
        <end position="75"/>
    </location>
    <ligand>
        <name>ATP</name>
        <dbReference type="ChEBI" id="CHEBI:30616"/>
    </ligand>
</feature>
<gene>
    <name type="primary">TIF1</name>
    <name type="synonym">TIF41</name>
    <name type="ORF">CHGG_00963</name>
</gene>
<organism>
    <name type="scientific">Chaetomium globosum (strain ATCC 6205 / CBS 148.51 / DSM 1962 / NBRC 6347 / NRRL 1970)</name>
    <name type="common">Soil fungus</name>
    <dbReference type="NCBI Taxonomy" id="306901"/>
    <lineage>
        <taxon>Eukaryota</taxon>
        <taxon>Fungi</taxon>
        <taxon>Dikarya</taxon>
        <taxon>Ascomycota</taxon>
        <taxon>Pezizomycotina</taxon>
        <taxon>Sordariomycetes</taxon>
        <taxon>Sordariomycetidae</taxon>
        <taxon>Sordariales</taxon>
        <taxon>Chaetomiaceae</taxon>
        <taxon>Chaetomium</taxon>
    </lineage>
</organism>
<reference key="1">
    <citation type="journal article" date="2015" name="Genome Announc.">
        <title>Draft genome sequence of the cellulolytic fungus Chaetomium globosum.</title>
        <authorList>
            <person name="Cuomo C.A."/>
            <person name="Untereiner W.A."/>
            <person name="Ma L.-J."/>
            <person name="Grabherr M."/>
            <person name="Birren B.W."/>
        </authorList>
    </citation>
    <scope>NUCLEOTIDE SEQUENCE [LARGE SCALE GENOMIC DNA]</scope>
    <source>
        <strain>ATCC 6205 / CBS 148.51 / DSM 1962 / NBRC 6347 / NRRL 1970</strain>
    </source>
</reference>